<feature type="chain" id="PRO_0000233460" description="Small ribosomal subunit protein uS17">
    <location>
        <begin position="1"/>
        <end position="84"/>
    </location>
</feature>
<reference key="1">
    <citation type="journal article" date="2001" name="J. Bacteriol.">
        <title>Genome sequence and comparative analysis of the solvent-producing bacterium Clostridium acetobutylicum.</title>
        <authorList>
            <person name="Noelling J."/>
            <person name="Breton G."/>
            <person name="Omelchenko M.V."/>
            <person name="Makarova K.S."/>
            <person name="Zeng Q."/>
            <person name="Gibson R."/>
            <person name="Lee H.M."/>
            <person name="Dubois J."/>
            <person name="Qiu D."/>
            <person name="Hitti J."/>
            <person name="Wolf Y.I."/>
            <person name="Tatusov R.L."/>
            <person name="Sabathe F."/>
            <person name="Doucette-Stamm L.A."/>
            <person name="Soucaille P."/>
            <person name="Daly M.J."/>
            <person name="Bennett G.N."/>
            <person name="Koonin E.V."/>
            <person name="Smith D.R."/>
        </authorList>
    </citation>
    <scope>NUCLEOTIDE SEQUENCE [LARGE SCALE GENOMIC DNA]</scope>
    <source>
        <strain>ATCC 824 / DSM 792 / JCM 1419 / IAM 19013 / LMG 5710 / NBRC 13948 / NRRL B-527 / VKM B-1787 / 2291 / W</strain>
    </source>
</reference>
<proteinExistence type="inferred from homology"/>
<name>RS17_CLOAB</name>
<organism>
    <name type="scientific">Clostridium acetobutylicum (strain ATCC 824 / DSM 792 / JCM 1419 / IAM 19013 / LMG 5710 / NBRC 13948 / NRRL B-527 / VKM B-1787 / 2291 / W)</name>
    <dbReference type="NCBI Taxonomy" id="272562"/>
    <lineage>
        <taxon>Bacteria</taxon>
        <taxon>Bacillati</taxon>
        <taxon>Bacillota</taxon>
        <taxon>Clostridia</taxon>
        <taxon>Eubacteriales</taxon>
        <taxon>Clostridiaceae</taxon>
        <taxon>Clostridium</taxon>
    </lineage>
</organism>
<dbReference type="EMBL" id="AE001437">
    <property type="protein sequence ID" value="AAK81063.1"/>
    <property type="molecule type" value="Genomic_DNA"/>
</dbReference>
<dbReference type="PIR" id="D97284">
    <property type="entry name" value="D97284"/>
</dbReference>
<dbReference type="RefSeq" id="NP_349723.1">
    <property type="nucleotide sequence ID" value="NC_003030.1"/>
</dbReference>
<dbReference type="RefSeq" id="WP_010966403.1">
    <property type="nucleotide sequence ID" value="NC_003030.1"/>
</dbReference>
<dbReference type="SMR" id="Q97EI7"/>
<dbReference type="STRING" id="272562.CA_C3124"/>
<dbReference type="GeneID" id="44999611"/>
<dbReference type="KEGG" id="cac:CA_C3124"/>
<dbReference type="PATRIC" id="fig|272562.8.peg.3307"/>
<dbReference type="eggNOG" id="COG0186">
    <property type="taxonomic scope" value="Bacteria"/>
</dbReference>
<dbReference type="HOGENOM" id="CLU_073626_1_0_9"/>
<dbReference type="OrthoDB" id="9811714at2"/>
<dbReference type="Proteomes" id="UP000000814">
    <property type="component" value="Chromosome"/>
</dbReference>
<dbReference type="GO" id="GO:0022627">
    <property type="term" value="C:cytosolic small ribosomal subunit"/>
    <property type="evidence" value="ECO:0007669"/>
    <property type="project" value="TreeGrafter"/>
</dbReference>
<dbReference type="GO" id="GO:0019843">
    <property type="term" value="F:rRNA binding"/>
    <property type="evidence" value="ECO:0007669"/>
    <property type="project" value="UniProtKB-UniRule"/>
</dbReference>
<dbReference type="GO" id="GO:0003735">
    <property type="term" value="F:structural constituent of ribosome"/>
    <property type="evidence" value="ECO:0007669"/>
    <property type="project" value="InterPro"/>
</dbReference>
<dbReference type="GO" id="GO:0006412">
    <property type="term" value="P:translation"/>
    <property type="evidence" value="ECO:0007669"/>
    <property type="project" value="UniProtKB-UniRule"/>
</dbReference>
<dbReference type="CDD" id="cd00364">
    <property type="entry name" value="Ribosomal_uS17"/>
    <property type="match status" value="1"/>
</dbReference>
<dbReference type="FunFam" id="2.40.50.140:FF:000026">
    <property type="entry name" value="30S ribosomal protein S17"/>
    <property type="match status" value="1"/>
</dbReference>
<dbReference type="Gene3D" id="2.40.50.140">
    <property type="entry name" value="Nucleic acid-binding proteins"/>
    <property type="match status" value="1"/>
</dbReference>
<dbReference type="HAMAP" id="MF_01345_B">
    <property type="entry name" value="Ribosomal_uS17_B"/>
    <property type="match status" value="1"/>
</dbReference>
<dbReference type="InterPro" id="IPR012340">
    <property type="entry name" value="NA-bd_OB-fold"/>
</dbReference>
<dbReference type="InterPro" id="IPR000266">
    <property type="entry name" value="Ribosomal_uS17"/>
</dbReference>
<dbReference type="InterPro" id="IPR019984">
    <property type="entry name" value="Ribosomal_uS17_bact/chlr"/>
</dbReference>
<dbReference type="NCBIfam" id="NF004123">
    <property type="entry name" value="PRK05610.1"/>
    <property type="match status" value="1"/>
</dbReference>
<dbReference type="NCBIfam" id="TIGR03635">
    <property type="entry name" value="uS17_bact"/>
    <property type="match status" value="1"/>
</dbReference>
<dbReference type="PANTHER" id="PTHR10744">
    <property type="entry name" value="40S RIBOSOMAL PROTEIN S11 FAMILY MEMBER"/>
    <property type="match status" value="1"/>
</dbReference>
<dbReference type="PANTHER" id="PTHR10744:SF1">
    <property type="entry name" value="SMALL RIBOSOMAL SUBUNIT PROTEIN US17M"/>
    <property type="match status" value="1"/>
</dbReference>
<dbReference type="Pfam" id="PF00366">
    <property type="entry name" value="Ribosomal_S17"/>
    <property type="match status" value="1"/>
</dbReference>
<dbReference type="PRINTS" id="PR00973">
    <property type="entry name" value="RIBOSOMALS17"/>
</dbReference>
<dbReference type="SUPFAM" id="SSF50249">
    <property type="entry name" value="Nucleic acid-binding proteins"/>
    <property type="match status" value="1"/>
</dbReference>
<comment type="function">
    <text evidence="1">One of the primary rRNA binding proteins, it binds specifically to the 5'-end of 16S ribosomal RNA.</text>
</comment>
<comment type="subunit">
    <text evidence="1">Part of the 30S ribosomal subunit.</text>
</comment>
<comment type="similarity">
    <text evidence="1">Belongs to the universal ribosomal protein uS17 family.</text>
</comment>
<sequence>MERGNRKTRIGRVVSDKMDKTIVVAVETKVRHPLYGKTVNKTTKFKAHDEKNEAKLNDRVQIMETRPLSKDKRWRLVEIVEKAK</sequence>
<protein>
    <recommendedName>
        <fullName evidence="1">Small ribosomal subunit protein uS17</fullName>
    </recommendedName>
    <alternativeName>
        <fullName evidence="2">30S ribosomal protein S17</fullName>
    </alternativeName>
</protein>
<evidence type="ECO:0000255" key="1">
    <source>
        <dbReference type="HAMAP-Rule" id="MF_01345"/>
    </source>
</evidence>
<evidence type="ECO:0000305" key="2"/>
<gene>
    <name evidence="1" type="primary">rpsQ</name>
    <name type="ordered locus">CA_C3124</name>
</gene>
<keyword id="KW-1185">Reference proteome</keyword>
<keyword id="KW-0687">Ribonucleoprotein</keyword>
<keyword id="KW-0689">Ribosomal protein</keyword>
<keyword id="KW-0694">RNA-binding</keyword>
<keyword id="KW-0699">rRNA-binding</keyword>
<accession>Q97EI7</accession>